<comment type="function">
    <text evidence="1">Involved in the biosynthesis of branched-chain amino acids (BCAA). Catalyzes an alkyl-migration followed by a ketol-acid reduction of (S)-2-acetolactate (S2AL) to yield (R)-2,3-dihydroxy-isovalerate. In the isomerase reaction, S2AL is rearranged via a Mg-dependent methyl migration to produce 3-hydroxy-3-methyl-2-ketobutyrate (HMKB). In the reductase reaction, this 2-ketoacid undergoes a metal-dependent reduction by NADPH to yield (R)-2,3-dihydroxy-isovalerate.</text>
</comment>
<comment type="catalytic activity">
    <reaction evidence="1">
        <text>(2R)-2,3-dihydroxy-3-methylbutanoate + NADP(+) = (2S)-2-acetolactate + NADPH + H(+)</text>
        <dbReference type="Rhea" id="RHEA:22068"/>
        <dbReference type="ChEBI" id="CHEBI:15378"/>
        <dbReference type="ChEBI" id="CHEBI:49072"/>
        <dbReference type="ChEBI" id="CHEBI:57783"/>
        <dbReference type="ChEBI" id="CHEBI:58349"/>
        <dbReference type="ChEBI" id="CHEBI:58476"/>
        <dbReference type="EC" id="1.1.1.86"/>
    </reaction>
</comment>
<comment type="catalytic activity">
    <reaction evidence="1">
        <text>(2R,3R)-2,3-dihydroxy-3-methylpentanoate + NADP(+) = (S)-2-ethyl-2-hydroxy-3-oxobutanoate + NADPH + H(+)</text>
        <dbReference type="Rhea" id="RHEA:13493"/>
        <dbReference type="ChEBI" id="CHEBI:15378"/>
        <dbReference type="ChEBI" id="CHEBI:49256"/>
        <dbReference type="ChEBI" id="CHEBI:49258"/>
        <dbReference type="ChEBI" id="CHEBI:57783"/>
        <dbReference type="ChEBI" id="CHEBI:58349"/>
        <dbReference type="EC" id="1.1.1.86"/>
    </reaction>
</comment>
<comment type="cofactor">
    <cofactor evidence="1">
        <name>Mg(2+)</name>
        <dbReference type="ChEBI" id="CHEBI:18420"/>
    </cofactor>
    <text evidence="1">Binds 2 magnesium ions per subunit.</text>
</comment>
<comment type="pathway">
    <text evidence="1">Amino-acid biosynthesis; L-isoleucine biosynthesis; L-isoleucine from 2-oxobutanoate: step 2/4.</text>
</comment>
<comment type="pathway">
    <text evidence="1">Amino-acid biosynthesis; L-valine biosynthesis; L-valine from pyruvate: step 2/4.</text>
</comment>
<comment type="similarity">
    <text evidence="1">Belongs to the ketol-acid reductoisomerase family.</text>
</comment>
<gene>
    <name evidence="1" type="primary">ilvC</name>
    <name type="ordered locus">Dtpsy_1951</name>
</gene>
<feature type="chain" id="PRO_1000190949" description="Ketol-acid reductoisomerase (NADP(+))">
    <location>
        <begin position="1"/>
        <end position="338"/>
    </location>
</feature>
<feature type="domain" description="KARI N-terminal Rossmann" evidence="2">
    <location>
        <begin position="1"/>
        <end position="181"/>
    </location>
</feature>
<feature type="domain" description="KARI C-terminal knotted" evidence="3">
    <location>
        <begin position="182"/>
        <end position="327"/>
    </location>
</feature>
<feature type="active site" evidence="1">
    <location>
        <position position="107"/>
    </location>
</feature>
<feature type="binding site" evidence="1">
    <location>
        <begin position="24"/>
        <end position="27"/>
    </location>
    <ligand>
        <name>NADP(+)</name>
        <dbReference type="ChEBI" id="CHEBI:58349"/>
    </ligand>
</feature>
<feature type="binding site" evidence="1">
    <location>
        <position position="47"/>
    </location>
    <ligand>
        <name>NADP(+)</name>
        <dbReference type="ChEBI" id="CHEBI:58349"/>
    </ligand>
</feature>
<feature type="binding site" evidence="1">
    <location>
        <position position="52"/>
    </location>
    <ligand>
        <name>NADP(+)</name>
        <dbReference type="ChEBI" id="CHEBI:58349"/>
    </ligand>
</feature>
<feature type="binding site" evidence="1">
    <location>
        <position position="133"/>
    </location>
    <ligand>
        <name>NADP(+)</name>
        <dbReference type="ChEBI" id="CHEBI:58349"/>
    </ligand>
</feature>
<feature type="binding site" evidence="1">
    <location>
        <position position="190"/>
    </location>
    <ligand>
        <name>Mg(2+)</name>
        <dbReference type="ChEBI" id="CHEBI:18420"/>
        <label>1</label>
    </ligand>
</feature>
<feature type="binding site" evidence="1">
    <location>
        <position position="190"/>
    </location>
    <ligand>
        <name>Mg(2+)</name>
        <dbReference type="ChEBI" id="CHEBI:18420"/>
        <label>2</label>
    </ligand>
</feature>
<feature type="binding site" evidence="1">
    <location>
        <position position="194"/>
    </location>
    <ligand>
        <name>Mg(2+)</name>
        <dbReference type="ChEBI" id="CHEBI:18420"/>
        <label>1</label>
    </ligand>
</feature>
<feature type="binding site" evidence="1">
    <location>
        <position position="226"/>
    </location>
    <ligand>
        <name>Mg(2+)</name>
        <dbReference type="ChEBI" id="CHEBI:18420"/>
        <label>2</label>
    </ligand>
</feature>
<feature type="binding site" evidence="1">
    <location>
        <position position="230"/>
    </location>
    <ligand>
        <name>Mg(2+)</name>
        <dbReference type="ChEBI" id="CHEBI:18420"/>
        <label>2</label>
    </ligand>
</feature>
<feature type="binding site" evidence="1">
    <location>
        <position position="251"/>
    </location>
    <ligand>
        <name>substrate</name>
    </ligand>
</feature>
<name>ILVC_ACIET</name>
<keyword id="KW-0028">Amino-acid biosynthesis</keyword>
<keyword id="KW-0100">Branched-chain amino acid biosynthesis</keyword>
<keyword id="KW-0460">Magnesium</keyword>
<keyword id="KW-0479">Metal-binding</keyword>
<keyword id="KW-0521">NADP</keyword>
<keyword id="KW-0560">Oxidoreductase</keyword>
<keyword id="KW-1185">Reference proteome</keyword>
<evidence type="ECO:0000255" key="1">
    <source>
        <dbReference type="HAMAP-Rule" id="MF_00435"/>
    </source>
</evidence>
<evidence type="ECO:0000255" key="2">
    <source>
        <dbReference type="PROSITE-ProRule" id="PRU01197"/>
    </source>
</evidence>
<evidence type="ECO:0000255" key="3">
    <source>
        <dbReference type="PROSITE-ProRule" id="PRU01198"/>
    </source>
</evidence>
<reference key="1">
    <citation type="submission" date="2009-01" db="EMBL/GenBank/DDBJ databases">
        <title>Complete sequence of Diaphorobacter sp. TPSY.</title>
        <authorList>
            <consortium name="US DOE Joint Genome Institute"/>
            <person name="Lucas S."/>
            <person name="Copeland A."/>
            <person name="Lapidus A."/>
            <person name="Glavina del Rio T."/>
            <person name="Tice H."/>
            <person name="Bruce D."/>
            <person name="Goodwin L."/>
            <person name="Pitluck S."/>
            <person name="Chertkov O."/>
            <person name="Brettin T."/>
            <person name="Detter J.C."/>
            <person name="Han C."/>
            <person name="Larimer F."/>
            <person name="Land M."/>
            <person name="Hauser L."/>
            <person name="Kyrpides N."/>
            <person name="Mikhailova N."/>
            <person name="Coates J.D."/>
        </authorList>
    </citation>
    <scope>NUCLEOTIDE SEQUENCE [LARGE SCALE GENOMIC DNA]</scope>
    <source>
        <strain>TPSY</strain>
    </source>
</reference>
<proteinExistence type="inferred from homology"/>
<accession>B9MA35</accession>
<organism>
    <name type="scientific">Acidovorax ebreus (strain TPSY)</name>
    <name type="common">Diaphorobacter sp. (strain TPSY)</name>
    <dbReference type="NCBI Taxonomy" id="535289"/>
    <lineage>
        <taxon>Bacteria</taxon>
        <taxon>Pseudomonadati</taxon>
        <taxon>Pseudomonadota</taxon>
        <taxon>Betaproteobacteria</taxon>
        <taxon>Burkholderiales</taxon>
        <taxon>Comamonadaceae</taxon>
        <taxon>Diaphorobacter</taxon>
    </lineage>
</organism>
<protein>
    <recommendedName>
        <fullName evidence="1">Ketol-acid reductoisomerase (NADP(+))</fullName>
        <shortName evidence="1">KARI</shortName>
        <ecNumber evidence="1">1.1.1.86</ecNumber>
    </recommendedName>
    <alternativeName>
        <fullName evidence="1">Acetohydroxy-acid isomeroreductase</fullName>
        <shortName evidence="1">AHIR</shortName>
    </alternativeName>
    <alternativeName>
        <fullName evidence="1">Alpha-keto-beta-hydroxylacyl reductoisomerase</fullName>
    </alternativeName>
    <alternativeName>
        <fullName evidence="1">Ketol-acid reductoisomerase type 1</fullName>
    </alternativeName>
    <alternativeName>
        <fullName evidence="1">Ketol-acid reductoisomerase type I</fullName>
    </alternativeName>
</protein>
<dbReference type="EC" id="1.1.1.86" evidence="1"/>
<dbReference type="EMBL" id="CP001392">
    <property type="protein sequence ID" value="ACM33407.1"/>
    <property type="molecule type" value="Genomic_DNA"/>
</dbReference>
<dbReference type="RefSeq" id="WP_011805035.1">
    <property type="nucleotide sequence ID" value="NC_011992.1"/>
</dbReference>
<dbReference type="SMR" id="B9MA35"/>
<dbReference type="GeneID" id="84681199"/>
<dbReference type="KEGG" id="dia:Dtpsy_1951"/>
<dbReference type="eggNOG" id="COG0059">
    <property type="taxonomic scope" value="Bacteria"/>
</dbReference>
<dbReference type="HOGENOM" id="CLU_033821_0_1_4"/>
<dbReference type="UniPathway" id="UPA00047">
    <property type="reaction ID" value="UER00056"/>
</dbReference>
<dbReference type="UniPathway" id="UPA00049">
    <property type="reaction ID" value="UER00060"/>
</dbReference>
<dbReference type="Proteomes" id="UP000000450">
    <property type="component" value="Chromosome"/>
</dbReference>
<dbReference type="GO" id="GO:0005829">
    <property type="term" value="C:cytosol"/>
    <property type="evidence" value="ECO:0007669"/>
    <property type="project" value="TreeGrafter"/>
</dbReference>
<dbReference type="GO" id="GO:0004455">
    <property type="term" value="F:ketol-acid reductoisomerase activity"/>
    <property type="evidence" value="ECO:0007669"/>
    <property type="project" value="UniProtKB-UniRule"/>
</dbReference>
<dbReference type="GO" id="GO:0000287">
    <property type="term" value="F:magnesium ion binding"/>
    <property type="evidence" value="ECO:0007669"/>
    <property type="project" value="UniProtKB-UniRule"/>
</dbReference>
<dbReference type="GO" id="GO:0050661">
    <property type="term" value="F:NADP binding"/>
    <property type="evidence" value="ECO:0007669"/>
    <property type="project" value="InterPro"/>
</dbReference>
<dbReference type="GO" id="GO:0009097">
    <property type="term" value="P:isoleucine biosynthetic process"/>
    <property type="evidence" value="ECO:0007669"/>
    <property type="project" value="UniProtKB-UniRule"/>
</dbReference>
<dbReference type="GO" id="GO:0009099">
    <property type="term" value="P:L-valine biosynthetic process"/>
    <property type="evidence" value="ECO:0007669"/>
    <property type="project" value="UniProtKB-UniRule"/>
</dbReference>
<dbReference type="FunFam" id="3.40.50.720:FF:000023">
    <property type="entry name" value="Ketol-acid reductoisomerase (NADP(+))"/>
    <property type="match status" value="1"/>
</dbReference>
<dbReference type="Gene3D" id="6.10.240.10">
    <property type="match status" value="1"/>
</dbReference>
<dbReference type="Gene3D" id="3.40.50.720">
    <property type="entry name" value="NAD(P)-binding Rossmann-like Domain"/>
    <property type="match status" value="1"/>
</dbReference>
<dbReference type="HAMAP" id="MF_00435">
    <property type="entry name" value="IlvC"/>
    <property type="match status" value="1"/>
</dbReference>
<dbReference type="InterPro" id="IPR008927">
    <property type="entry name" value="6-PGluconate_DH-like_C_sf"/>
</dbReference>
<dbReference type="InterPro" id="IPR013023">
    <property type="entry name" value="KARI"/>
</dbReference>
<dbReference type="InterPro" id="IPR000506">
    <property type="entry name" value="KARI_C"/>
</dbReference>
<dbReference type="InterPro" id="IPR013116">
    <property type="entry name" value="KARI_N"/>
</dbReference>
<dbReference type="InterPro" id="IPR014359">
    <property type="entry name" value="KARI_prok"/>
</dbReference>
<dbReference type="InterPro" id="IPR036291">
    <property type="entry name" value="NAD(P)-bd_dom_sf"/>
</dbReference>
<dbReference type="NCBIfam" id="TIGR00465">
    <property type="entry name" value="ilvC"/>
    <property type="match status" value="1"/>
</dbReference>
<dbReference type="NCBIfam" id="NF004017">
    <property type="entry name" value="PRK05479.1"/>
    <property type="match status" value="1"/>
</dbReference>
<dbReference type="NCBIfam" id="NF009940">
    <property type="entry name" value="PRK13403.1"/>
    <property type="match status" value="1"/>
</dbReference>
<dbReference type="PANTHER" id="PTHR21371">
    <property type="entry name" value="KETOL-ACID REDUCTOISOMERASE, MITOCHONDRIAL"/>
    <property type="match status" value="1"/>
</dbReference>
<dbReference type="PANTHER" id="PTHR21371:SF1">
    <property type="entry name" value="KETOL-ACID REDUCTOISOMERASE, MITOCHONDRIAL"/>
    <property type="match status" value="1"/>
</dbReference>
<dbReference type="Pfam" id="PF01450">
    <property type="entry name" value="KARI_C"/>
    <property type="match status" value="1"/>
</dbReference>
<dbReference type="Pfam" id="PF07991">
    <property type="entry name" value="KARI_N"/>
    <property type="match status" value="1"/>
</dbReference>
<dbReference type="PIRSF" id="PIRSF000116">
    <property type="entry name" value="IlvC_gammaproteo"/>
    <property type="match status" value="1"/>
</dbReference>
<dbReference type="SUPFAM" id="SSF48179">
    <property type="entry name" value="6-phosphogluconate dehydrogenase C-terminal domain-like"/>
    <property type="match status" value="1"/>
</dbReference>
<dbReference type="SUPFAM" id="SSF51735">
    <property type="entry name" value="NAD(P)-binding Rossmann-fold domains"/>
    <property type="match status" value="1"/>
</dbReference>
<dbReference type="PROSITE" id="PS51851">
    <property type="entry name" value="KARI_C"/>
    <property type="match status" value="1"/>
</dbReference>
<dbReference type="PROSITE" id="PS51850">
    <property type="entry name" value="KARI_N"/>
    <property type="match status" value="1"/>
</dbReference>
<sequence>MKVFYDKDCDLSLIKGKTVAIIGYGSQGHAHAQNLNDSGVKVVVGLRKGGASWDKVGKAGLTVKEVNDAVKEADVVMILLPDEQIAEVYKNNVEPHIKQGASLAFAHGFNVHYNQVVPRADLDVWMVAPKAPGHTVRNTYTQGGGVPHLVAVHQDKSGKARDLALSYAMANGGGKAGIIETNFKEETETDLFGEQAVLCGGAVELIKMGYETLVEAGYAPEMAYFECLHELKLIVDLIYEGGIANMNYSISNNAEFGEYVTGPEVINEQSRAAMRNALKRIQNGDYAKMFIQEGRLNYPSMTARRRNTADHSIEVVGAQLRAMMPWIAKNKLVDQTRN</sequence>